<comment type="function">
    <text evidence="1">ATP-dependent specificity component of the Clp protease. It directs the protease to specific substrates. Can perform chaperone functions in the absence of ClpP.</text>
</comment>
<comment type="subunit">
    <text evidence="1">Component of the ClpX-ClpP complex. Forms a hexameric ring that, in the presence of ATP, binds to fourteen ClpP subunits assembled into a disk-like structure with a central cavity, resembling the structure of eukaryotic proteasomes.</text>
</comment>
<comment type="similarity">
    <text evidence="1">Belongs to the ClpX chaperone family.</text>
</comment>
<protein>
    <recommendedName>
        <fullName evidence="1">ATP-dependent Clp protease ATP-binding subunit ClpX 2</fullName>
    </recommendedName>
</protein>
<sequence>MSEDKHGKDSGGKLLYCSFCGKSQHEVRKLIAGPAVFVCDECVELCNDIIREELQESASTGADKLPKPKEIKKVLDEYVIGQEKAKRILSVAVYNHYKRLRAQQTHSKKNEVELAKSNILLIGPTGSGKTLLAETLARLLDVPFTIADATTLTEAGYVGEDVENIIQKILQKCDYDVEKAEQGIVYIDEIDKISRKADNPSITRDVSGEGVQQALLKLIEGTVASVPPQGGRKHPQQEFLQVNTANILFICGGAFAGLEKIIRSRSEQGGIGFAADVKSKDDSRNVGEVLADVEAEDLIRYGLIPEFVGRLPVVATLEELDEAALVRILTEPKNALVKQYRRLFEMESCELEIRDDALGAIARKAMARKTGARGLRTILEHTLLDTMYELPSSERISKVVVDEKVINGESEPLMIYDNSLEKQAAAAD</sequence>
<dbReference type="EMBL" id="AE017282">
    <property type="protein sequence ID" value="AAU93283.1"/>
    <property type="molecule type" value="Genomic_DNA"/>
</dbReference>
<dbReference type="RefSeq" id="WP_010959878.1">
    <property type="nucleotide sequence ID" value="NC_002977.6"/>
</dbReference>
<dbReference type="SMR" id="Q60BE7"/>
<dbReference type="STRING" id="243233.MCA0530"/>
<dbReference type="GeneID" id="88222861"/>
<dbReference type="KEGG" id="mca:MCA0530"/>
<dbReference type="eggNOG" id="COG1219">
    <property type="taxonomic scope" value="Bacteria"/>
</dbReference>
<dbReference type="HOGENOM" id="CLU_014218_8_2_6"/>
<dbReference type="Proteomes" id="UP000006821">
    <property type="component" value="Chromosome"/>
</dbReference>
<dbReference type="GO" id="GO:0009376">
    <property type="term" value="C:HslUV protease complex"/>
    <property type="evidence" value="ECO:0007669"/>
    <property type="project" value="TreeGrafter"/>
</dbReference>
<dbReference type="GO" id="GO:0005524">
    <property type="term" value="F:ATP binding"/>
    <property type="evidence" value="ECO:0007669"/>
    <property type="project" value="UniProtKB-UniRule"/>
</dbReference>
<dbReference type="GO" id="GO:0016887">
    <property type="term" value="F:ATP hydrolysis activity"/>
    <property type="evidence" value="ECO:0007669"/>
    <property type="project" value="InterPro"/>
</dbReference>
<dbReference type="GO" id="GO:0140662">
    <property type="term" value="F:ATP-dependent protein folding chaperone"/>
    <property type="evidence" value="ECO:0007669"/>
    <property type="project" value="InterPro"/>
</dbReference>
<dbReference type="GO" id="GO:0046983">
    <property type="term" value="F:protein dimerization activity"/>
    <property type="evidence" value="ECO:0007669"/>
    <property type="project" value="InterPro"/>
</dbReference>
<dbReference type="GO" id="GO:0051082">
    <property type="term" value="F:unfolded protein binding"/>
    <property type="evidence" value="ECO:0007669"/>
    <property type="project" value="UniProtKB-UniRule"/>
</dbReference>
<dbReference type="GO" id="GO:0008270">
    <property type="term" value="F:zinc ion binding"/>
    <property type="evidence" value="ECO:0007669"/>
    <property type="project" value="InterPro"/>
</dbReference>
<dbReference type="GO" id="GO:0051301">
    <property type="term" value="P:cell division"/>
    <property type="evidence" value="ECO:0007669"/>
    <property type="project" value="TreeGrafter"/>
</dbReference>
<dbReference type="GO" id="GO:0051603">
    <property type="term" value="P:proteolysis involved in protein catabolic process"/>
    <property type="evidence" value="ECO:0007669"/>
    <property type="project" value="TreeGrafter"/>
</dbReference>
<dbReference type="CDD" id="cd19497">
    <property type="entry name" value="RecA-like_ClpX"/>
    <property type="match status" value="1"/>
</dbReference>
<dbReference type="FunFam" id="1.10.8.60:FF:000002">
    <property type="entry name" value="ATP-dependent Clp protease ATP-binding subunit ClpX"/>
    <property type="match status" value="1"/>
</dbReference>
<dbReference type="FunFam" id="3.40.50.300:FF:000005">
    <property type="entry name" value="ATP-dependent Clp protease ATP-binding subunit ClpX"/>
    <property type="match status" value="1"/>
</dbReference>
<dbReference type="Gene3D" id="1.10.8.60">
    <property type="match status" value="1"/>
</dbReference>
<dbReference type="Gene3D" id="6.20.220.10">
    <property type="entry name" value="ClpX chaperone, C4-type zinc finger domain"/>
    <property type="match status" value="1"/>
</dbReference>
<dbReference type="Gene3D" id="3.40.50.300">
    <property type="entry name" value="P-loop containing nucleotide triphosphate hydrolases"/>
    <property type="match status" value="1"/>
</dbReference>
<dbReference type="HAMAP" id="MF_00175">
    <property type="entry name" value="ClpX"/>
    <property type="match status" value="1"/>
</dbReference>
<dbReference type="InterPro" id="IPR003593">
    <property type="entry name" value="AAA+_ATPase"/>
</dbReference>
<dbReference type="InterPro" id="IPR050052">
    <property type="entry name" value="ATP-dep_Clp_protease_ClpX"/>
</dbReference>
<dbReference type="InterPro" id="IPR003959">
    <property type="entry name" value="ATPase_AAA_core"/>
</dbReference>
<dbReference type="InterPro" id="IPR019489">
    <property type="entry name" value="Clp_ATPase_C"/>
</dbReference>
<dbReference type="InterPro" id="IPR004487">
    <property type="entry name" value="Clp_protease_ATP-bd_su_ClpX"/>
</dbReference>
<dbReference type="InterPro" id="IPR046425">
    <property type="entry name" value="ClpX_bact"/>
</dbReference>
<dbReference type="InterPro" id="IPR027417">
    <property type="entry name" value="P-loop_NTPase"/>
</dbReference>
<dbReference type="InterPro" id="IPR010603">
    <property type="entry name" value="Znf_CppX_C4"/>
</dbReference>
<dbReference type="InterPro" id="IPR038366">
    <property type="entry name" value="Znf_CppX_C4_sf"/>
</dbReference>
<dbReference type="NCBIfam" id="TIGR00382">
    <property type="entry name" value="clpX"/>
    <property type="match status" value="1"/>
</dbReference>
<dbReference type="NCBIfam" id="NF003745">
    <property type="entry name" value="PRK05342.1"/>
    <property type="match status" value="1"/>
</dbReference>
<dbReference type="PANTHER" id="PTHR48102:SF7">
    <property type="entry name" value="ATP-DEPENDENT CLP PROTEASE ATP-BINDING SUBUNIT CLPX-LIKE, MITOCHONDRIAL"/>
    <property type="match status" value="1"/>
</dbReference>
<dbReference type="PANTHER" id="PTHR48102">
    <property type="entry name" value="ATP-DEPENDENT CLP PROTEASE ATP-BINDING SUBUNIT CLPX-LIKE, MITOCHONDRIAL-RELATED"/>
    <property type="match status" value="1"/>
</dbReference>
<dbReference type="Pfam" id="PF07724">
    <property type="entry name" value="AAA_2"/>
    <property type="match status" value="1"/>
</dbReference>
<dbReference type="Pfam" id="PF10431">
    <property type="entry name" value="ClpB_D2-small"/>
    <property type="match status" value="1"/>
</dbReference>
<dbReference type="Pfam" id="PF06689">
    <property type="entry name" value="zf-C4_ClpX"/>
    <property type="match status" value="1"/>
</dbReference>
<dbReference type="SMART" id="SM00382">
    <property type="entry name" value="AAA"/>
    <property type="match status" value="1"/>
</dbReference>
<dbReference type="SMART" id="SM01086">
    <property type="entry name" value="ClpB_D2-small"/>
    <property type="match status" value="1"/>
</dbReference>
<dbReference type="SMART" id="SM00994">
    <property type="entry name" value="zf-C4_ClpX"/>
    <property type="match status" value="1"/>
</dbReference>
<dbReference type="SUPFAM" id="SSF57716">
    <property type="entry name" value="Glucocorticoid receptor-like (DNA-binding domain)"/>
    <property type="match status" value="1"/>
</dbReference>
<dbReference type="SUPFAM" id="SSF52540">
    <property type="entry name" value="P-loop containing nucleoside triphosphate hydrolases"/>
    <property type="match status" value="1"/>
</dbReference>
<dbReference type="PROSITE" id="PS51902">
    <property type="entry name" value="CLPX_ZB"/>
    <property type="match status" value="1"/>
</dbReference>
<accession>Q60BE7</accession>
<reference key="1">
    <citation type="journal article" date="2004" name="PLoS Biol.">
        <title>Genomic insights into methanotrophy: the complete genome sequence of Methylococcus capsulatus (Bath).</title>
        <authorList>
            <person name="Ward N.L."/>
            <person name="Larsen O."/>
            <person name="Sakwa J."/>
            <person name="Bruseth L."/>
            <person name="Khouri H.M."/>
            <person name="Durkin A.S."/>
            <person name="Dimitrov G."/>
            <person name="Jiang L."/>
            <person name="Scanlan D."/>
            <person name="Kang K.H."/>
            <person name="Lewis M.R."/>
            <person name="Nelson K.E."/>
            <person name="Methe B.A."/>
            <person name="Wu M."/>
            <person name="Heidelberg J.F."/>
            <person name="Paulsen I.T."/>
            <person name="Fouts D.E."/>
            <person name="Ravel J."/>
            <person name="Tettelin H."/>
            <person name="Ren Q."/>
            <person name="Read T.D."/>
            <person name="DeBoy R.T."/>
            <person name="Seshadri R."/>
            <person name="Salzberg S.L."/>
            <person name="Jensen H.B."/>
            <person name="Birkeland N.K."/>
            <person name="Nelson W.C."/>
            <person name="Dodson R.J."/>
            <person name="Grindhaug S.H."/>
            <person name="Holt I.E."/>
            <person name="Eidhammer I."/>
            <person name="Jonasen I."/>
            <person name="Vanaken S."/>
            <person name="Utterback T.R."/>
            <person name="Feldblyum T.V."/>
            <person name="Fraser C.M."/>
            <person name="Lillehaug J.R."/>
            <person name="Eisen J.A."/>
        </authorList>
    </citation>
    <scope>NUCLEOTIDE SEQUENCE [LARGE SCALE GENOMIC DNA]</scope>
    <source>
        <strain>ATCC 33009 / NCIMB 11132 / Bath</strain>
    </source>
</reference>
<keyword id="KW-0067">ATP-binding</keyword>
<keyword id="KW-0143">Chaperone</keyword>
<keyword id="KW-0479">Metal-binding</keyword>
<keyword id="KW-0547">Nucleotide-binding</keyword>
<keyword id="KW-1185">Reference proteome</keyword>
<keyword id="KW-0862">Zinc</keyword>
<evidence type="ECO:0000255" key="1">
    <source>
        <dbReference type="HAMAP-Rule" id="MF_00175"/>
    </source>
</evidence>
<evidence type="ECO:0000255" key="2">
    <source>
        <dbReference type="PROSITE-ProRule" id="PRU01250"/>
    </source>
</evidence>
<gene>
    <name evidence="1" type="primary">clpX2</name>
    <name type="synonym">clpX-2</name>
    <name type="ordered locus">MCA0530</name>
</gene>
<organism>
    <name type="scientific">Methylococcus capsulatus (strain ATCC 33009 / NCIMB 11132 / Bath)</name>
    <dbReference type="NCBI Taxonomy" id="243233"/>
    <lineage>
        <taxon>Bacteria</taxon>
        <taxon>Pseudomonadati</taxon>
        <taxon>Pseudomonadota</taxon>
        <taxon>Gammaproteobacteria</taxon>
        <taxon>Methylococcales</taxon>
        <taxon>Methylococcaceae</taxon>
        <taxon>Methylococcus</taxon>
    </lineage>
</organism>
<feature type="chain" id="PRO_0000160383" description="ATP-dependent Clp protease ATP-binding subunit ClpX 2">
    <location>
        <begin position="1"/>
        <end position="428"/>
    </location>
</feature>
<feature type="domain" description="ClpX-type ZB" evidence="2">
    <location>
        <begin position="4"/>
        <end position="58"/>
    </location>
</feature>
<feature type="binding site" evidence="2">
    <location>
        <position position="17"/>
    </location>
    <ligand>
        <name>Zn(2+)</name>
        <dbReference type="ChEBI" id="CHEBI:29105"/>
    </ligand>
</feature>
<feature type="binding site" evidence="2">
    <location>
        <position position="20"/>
    </location>
    <ligand>
        <name>Zn(2+)</name>
        <dbReference type="ChEBI" id="CHEBI:29105"/>
    </ligand>
</feature>
<feature type="binding site" evidence="2">
    <location>
        <position position="39"/>
    </location>
    <ligand>
        <name>Zn(2+)</name>
        <dbReference type="ChEBI" id="CHEBI:29105"/>
    </ligand>
</feature>
<feature type="binding site" evidence="2">
    <location>
        <position position="42"/>
    </location>
    <ligand>
        <name>Zn(2+)</name>
        <dbReference type="ChEBI" id="CHEBI:29105"/>
    </ligand>
</feature>
<feature type="binding site" evidence="1">
    <location>
        <begin position="124"/>
        <end position="131"/>
    </location>
    <ligand>
        <name>ATP</name>
        <dbReference type="ChEBI" id="CHEBI:30616"/>
    </ligand>
</feature>
<name>CLPX2_METCA</name>
<proteinExistence type="inferred from homology"/>